<evidence type="ECO:0000255" key="1">
    <source>
        <dbReference type="HAMAP-Rule" id="MF_01014"/>
    </source>
</evidence>
<reference key="1">
    <citation type="journal article" date="2007" name="J. Bacteriol.">
        <title>The complete genome sequence of Bacillus thuringiensis Al Hakam.</title>
        <authorList>
            <person name="Challacombe J.F."/>
            <person name="Altherr M.R."/>
            <person name="Xie G."/>
            <person name="Bhotika S.S."/>
            <person name="Brown N."/>
            <person name="Bruce D."/>
            <person name="Campbell C.S."/>
            <person name="Campbell M.L."/>
            <person name="Chen J."/>
            <person name="Chertkov O."/>
            <person name="Cleland C."/>
            <person name="Dimitrijevic M."/>
            <person name="Doggett N.A."/>
            <person name="Fawcett J.J."/>
            <person name="Glavina T."/>
            <person name="Goodwin L.A."/>
            <person name="Green L.D."/>
            <person name="Han C.S."/>
            <person name="Hill K.K."/>
            <person name="Hitchcock P."/>
            <person name="Jackson P.J."/>
            <person name="Keim P."/>
            <person name="Kewalramani A.R."/>
            <person name="Longmire J."/>
            <person name="Lucas S."/>
            <person name="Malfatti S."/>
            <person name="Martinez D."/>
            <person name="McMurry K."/>
            <person name="Meincke L.J."/>
            <person name="Misra M."/>
            <person name="Moseman B.L."/>
            <person name="Mundt M."/>
            <person name="Munk A.C."/>
            <person name="Okinaka R.T."/>
            <person name="Parson-Quintana B."/>
            <person name="Reilly L.P."/>
            <person name="Richardson P."/>
            <person name="Robinson D.L."/>
            <person name="Saunders E."/>
            <person name="Tapia R."/>
            <person name="Tesmer J.G."/>
            <person name="Thayer N."/>
            <person name="Thompson L.S."/>
            <person name="Tice H."/>
            <person name="Ticknor L.O."/>
            <person name="Wills P.L."/>
            <person name="Gilna P."/>
            <person name="Brettin T.S."/>
        </authorList>
    </citation>
    <scope>NUCLEOTIDE SEQUENCE [LARGE SCALE GENOMIC DNA]</scope>
    <source>
        <strain>Al Hakam</strain>
    </source>
</reference>
<sequence length="239" mass="26058">MEIFPAIDLKEGRCVRLYQGEFSKETVMNEDPVAQAIIFEKFGAKRLHIVDLDGAVAGESLNLSVIERICKAVRIPVQVGGGIRSLVAVEKLFSVGVDKVILGTAALYDKTFLEEAVLLYKEKIIVGIDAKNGFVATRGWLDVSEISYIDLAKQMENIGVQTIVFTDISKDGTLAGPNIGQLELLQKSVAIRLIASGGVASIQDVKKLNDMNIYGVIIGKALYEKTIDLEEVLEVTKLC</sequence>
<accession>A0RBM1</accession>
<keyword id="KW-0028">Amino-acid biosynthesis</keyword>
<keyword id="KW-0963">Cytoplasm</keyword>
<keyword id="KW-0368">Histidine biosynthesis</keyword>
<keyword id="KW-0413">Isomerase</keyword>
<organism>
    <name type="scientific">Bacillus thuringiensis (strain Al Hakam)</name>
    <dbReference type="NCBI Taxonomy" id="412694"/>
    <lineage>
        <taxon>Bacteria</taxon>
        <taxon>Bacillati</taxon>
        <taxon>Bacillota</taxon>
        <taxon>Bacilli</taxon>
        <taxon>Bacillales</taxon>
        <taxon>Bacillaceae</taxon>
        <taxon>Bacillus</taxon>
        <taxon>Bacillus cereus group</taxon>
    </lineage>
</organism>
<dbReference type="EC" id="5.3.1.16" evidence="1"/>
<dbReference type="EMBL" id="CP000485">
    <property type="protein sequence ID" value="ABK84614.1"/>
    <property type="molecule type" value="Genomic_DNA"/>
</dbReference>
<dbReference type="RefSeq" id="WP_000402284.1">
    <property type="nucleotide sequence ID" value="NC_008600.1"/>
</dbReference>
<dbReference type="SMR" id="A0RBM1"/>
<dbReference type="KEGG" id="btl:BALH_1264"/>
<dbReference type="HOGENOM" id="CLU_048577_1_1_9"/>
<dbReference type="UniPathway" id="UPA00031">
    <property type="reaction ID" value="UER00009"/>
</dbReference>
<dbReference type="GO" id="GO:0005737">
    <property type="term" value="C:cytoplasm"/>
    <property type="evidence" value="ECO:0007669"/>
    <property type="project" value="UniProtKB-SubCell"/>
</dbReference>
<dbReference type="GO" id="GO:0003949">
    <property type="term" value="F:1-(5-phosphoribosyl)-5-[(5-phosphoribosylamino)methylideneamino]imidazole-4-carboxamide isomerase activity"/>
    <property type="evidence" value="ECO:0007669"/>
    <property type="project" value="UniProtKB-UniRule"/>
</dbReference>
<dbReference type="GO" id="GO:0000105">
    <property type="term" value="P:L-histidine biosynthetic process"/>
    <property type="evidence" value="ECO:0007669"/>
    <property type="project" value="UniProtKB-UniRule"/>
</dbReference>
<dbReference type="GO" id="GO:0000162">
    <property type="term" value="P:L-tryptophan biosynthetic process"/>
    <property type="evidence" value="ECO:0007669"/>
    <property type="project" value="TreeGrafter"/>
</dbReference>
<dbReference type="CDD" id="cd04732">
    <property type="entry name" value="HisA"/>
    <property type="match status" value="1"/>
</dbReference>
<dbReference type="FunFam" id="3.20.20.70:FF:000009">
    <property type="entry name" value="1-(5-phosphoribosyl)-5-[(5-phosphoribosylamino)methylideneamino] imidazole-4-carboxamide isomerase"/>
    <property type="match status" value="1"/>
</dbReference>
<dbReference type="Gene3D" id="3.20.20.70">
    <property type="entry name" value="Aldolase class I"/>
    <property type="match status" value="1"/>
</dbReference>
<dbReference type="HAMAP" id="MF_01014">
    <property type="entry name" value="HisA"/>
    <property type="match status" value="1"/>
</dbReference>
<dbReference type="InterPro" id="IPR013785">
    <property type="entry name" value="Aldolase_TIM"/>
</dbReference>
<dbReference type="InterPro" id="IPR006062">
    <property type="entry name" value="His_biosynth"/>
</dbReference>
<dbReference type="InterPro" id="IPR006063">
    <property type="entry name" value="HisA_bact_arch"/>
</dbReference>
<dbReference type="InterPro" id="IPR044524">
    <property type="entry name" value="Isoase_HisA-like"/>
</dbReference>
<dbReference type="InterPro" id="IPR023016">
    <property type="entry name" value="Isoase_HisA-like_bact"/>
</dbReference>
<dbReference type="InterPro" id="IPR011060">
    <property type="entry name" value="RibuloseP-bd_barrel"/>
</dbReference>
<dbReference type="NCBIfam" id="TIGR00007">
    <property type="entry name" value="1-(5-phosphoribosyl)-5-[(5-phosphoribosylamino)methylideneamino]imidazole-4-carboxamide isomerase"/>
    <property type="match status" value="1"/>
</dbReference>
<dbReference type="PANTHER" id="PTHR43090">
    <property type="entry name" value="1-(5-PHOSPHORIBOSYL)-5-[(5-PHOSPHORIBOSYLAMINO)METHYLIDENEAMINO] IMIDAZOLE-4-CARBOXAMIDE ISOMERASE"/>
    <property type="match status" value="1"/>
</dbReference>
<dbReference type="PANTHER" id="PTHR43090:SF2">
    <property type="entry name" value="1-(5-PHOSPHORIBOSYL)-5-[(5-PHOSPHORIBOSYLAMINO)METHYLIDENEAMINO] IMIDAZOLE-4-CARBOXAMIDE ISOMERASE"/>
    <property type="match status" value="1"/>
</dbReference>
<dbReference type="Pfam" id="PF00977">
    <property type="entry name" value="His_biosynth"/>
    <property type="match status" value="1"/>
</dbReference>
<dbReference type="SUPFAM" id="SSF51366">
    <property type="entry name" value="Ribulose-phoshate binding barrel"/>
    <property type="match status" value="1"/>
</dbReference>
<name>HIS4_BACAH</name>
<comment type="catalytic activity">
    <reaction evidence="1">
        <text>1-(5-phospho-beta-D-ribosyl)-5-[(5-phospho-beta-D-ribosylamino)methylideneamino]imidazole-4-carboxamide = 5-[(5-phospho-1-deoxy-D-ribulos-1-ylimino)methylamino]-1-(5-phospho-beta-D-ribosyl)imidazole-4-carboxamide</text>
        <dbReference type="Rhea" id="RHEA:15469"/>
        <dbReference type="ChEBI" id="CHEBI:58435"/>
        <dbReference type="ChEBI" id="CHEBI:58525"/>
        <dbReference type="EC" id="5.3.1.16"/>
    </reaction>
</comment>
<comment type="pathway">
    <text evidence="1">Amino-acid biosynthesis; L-histidine biosynthesis; L-histidine from 5-phospho-alpha-D-ribose 1-diphosphate: step 4/9.</text>
</comment>
<comment type="subcellular location">
    <subcellularLocation>
        <location evidence="1">Cytoplasm</location>
    </subcellularLocation>
</comment>
<comment type="similarity">
    <text evidence="1">Belongs to the HisA/HisF family.</text>
</comment>
<protein>
    <recommendedName>
        <fullName evidence="1">1-(5-phosphoribosyl)-5-[(5-phosphoribosylamino)methylideneamino] imidazole-4-carboxamide isomerase</fullName>
        <ecNumber evidence="1">5.3.1.16</ecNumber>
    </recommendedName>
    <alternativeName>
        <fullName evidence="1">Phosphoribosylformimino-5-aminoimidazole carboxamide ribotide isomerase</fullName>
    </alternativeName>
</protein>
<proteinExistence type="inferred from homology"/>
<feature type="chain" id="PRO_0000290450" description="1-(5-phosphoribosyl)-5-[(5-phosphoribosylamino)methylideneamino] imidazole-4-carboxamide isomerase">
    <location>
        <begin position="1"/>
        <end position="239"/>
    </location>
</feature>
<feature type="active site" description="Proton acceptor" evidence="1">
    <location>
        <position position="8"/>
    </location>
</feature>
<feature type="active site" description="Proton donor" evidence="1">
    <location>
        <position position="129"/>
    </location>
</feature>
<gene>
    <name evidence="1" type="primary">hisA</name>
    <name type="ordered locus">BALH_1264</name>
</gene>